<name>SYR_STRR6</name>
<evidence type="ECO:0000255" key="1">
    <source>
        <dbReference type="HAMAP-Rule" id="MF_00123"/>
    </source>
</evidence>
<sequence length="563" mass="63458">MNTKELIASELSSIIDSLDQEAILKLLETPKNSEMGDIAFPAFSLAKVERKAPQMIAAELAEKMNSQAFEKVVATGPYVNFFLDKSAISAQVLQAVTTEKEHYADQNIGKQENVVIDMSSPNIAKPFSIGHLRSTVIGDSLSHIFQKIGYQTVKVNHLGDWGKQFGMLIVAYKKWGDEEAVKAHPIDELLKLYVRINAEAENDPSLDEEAREWFRKLENGDEEALALWQWFRDESLVEFNRLYNELKVEFDSYNGEAFYNDKMDAVVDILSEKGLLLESEGAQVVNLEKYGIEHPALIKKSDGATLYITRDLAAALYRKNEYQFAKSIYVVGQEQSAHFKQLKAVLQEMGYDWSDDITHVPFGLVTKEGKKLSTRKGNVILLEPTVAEAVSRAKVQIEAKNPELENKDQVAHAVGVGAIKFYDLKTDRTNGYDFDLEAMVSFEGETGPYVQYAYARIQSILRKADFKPETAGNYSLNDTESWEIIKLIQDFPRIINRAADNFEPSIIAKFAISLAQSFNKYYAHTRILDESPERDSRLALSYATAVVLKEALRLLGVEAPEKM</sequence>
<feature type="chain" id="PRO_0000151619" description="Arginine--tRNA ligase">
    <location>
        <begin position="1"/>
        <end position="563"/>
    </location>
</feature>
<feature type="short sequence motif" description="'HIGH' region">
    <location>
        <begin position="121"/>
        <end position="131"/>
    </location>
</feature>
<accession>Q8DN69</accession>
<comment type="catalytic activity">
    <reaction evidence="1">
        <text>tRNA(Arg) + L-arginine + ATP = L-arginyl-tRNA(Arg) + AMP + diphosphate</text>
        <dbReference type="Rhea" id="RHEA:20301"/>
        <dbReference type="Rhea" id="RHEA-COMP:9658"/>
        <dbReference type="Rhea" id="RHEA-COMP:9673"/>
        <dbReference type="ChEBI" id="CHEBI:30616"/>
        <dbReference type="ChEBI" id="CHEBI:32682"/>
        <dbReference type="ChEBI" id="CHEBI:33019"/>
        <dbReference type="ChEBI" id="CHEBI:78442"/>
        <dbReference type="ChEBI" id="CHEBI:78513"/>
        <dbReference type="ChEBI" id="CHEBI:456215"/>
        <dbReference type="EC" id="6.1.1.19"/>
    </reaction>
</comment>
<comment type="subunit">
    <text evidence="1">Monomer.</text>
</comment>
<comment type="subcellular location">
    <subcellularLocation>
        <location evidence="1">Cytoplasm</location>
    </subcellularLocation>
</comment>
<comment type="similarity">
    <text evidence="1">Belongs to the class-I aminoacyl-tRNA synthetase family.</text>
</comment>
<keyword id="KW-0030">Aminoacyl-tRNA synthetase</keyword>
<keyword id="KW-0067">ATP-binding</keyword>
<keyword id="KW-0963">Cytoplasm</keyword>
<keyword id="KW-0436">Ligase</keyword>
<keyword id="KW-0547">Nucleotide-binding</keyword>
<keyword id="KW-0648">Protein biosynthesis</keyword>
<keyword id="KW-1185">Reference proteome</keyword>
<proteinExistence type="inferred from homology"/>
<dbReference type="EC" id="6.1.1.19" evidence="1"/>
<dbReference type="EMBL" id="AE007317">
    <property type="protein sequence ID" value="AAL00692.1"/>
    <property type="molecule type" value="Genomic_DNA"/>
</dbReference>
<dbReference type="PIR" id="A28667">
    <property type="entry name" value="A28667"/>
</dbReference>
<dbReference type="PIR" id="G98107">
    <property type="entry name" value="G98107"/>
</dbReference>
<dbReference type="RefSeq" id="NP_359481.1">
    <property type="nucleotide sequence ID" value="NC_003098.1"/>
</dbReference>
<dbReference type="RefSeq" id="WP_001092739.1">
    <property type="nucleotide sequence ID" value="NC_003098.1"/>
</dbReference>
<dbReference type="SMR" id="Q8DN69"/>
<dbReference type="STRING" id="171101.spr1890"/>
<dbReference type="KEGG" id="spr:spr1890"/>
<dbReference type="PATRIC" id="fig|171101.6.peg.2039"/>
<dbReference type="eggNOG" id="COG0018">
    <property type="taxonomic scope" value="Bacteria"/>
</dbReference>
<dbReference type="HOGENOM" id="CLU_006406_6_1_9"/>
<dbReference type="Proteomes" id="UP000000586">
    <property type="component" value="Chromosome"/>
</dbReference>
<dbReference type="GO" id="GO:0005737">
    <property type="term" value="C:cytoplasm"/>
    <property type="evidence" value="ECO:0007669"/>
    <property type="project" value="UniProtKB-SubCell"/>
</dbReference>
<dbReference type="GO" id="GO:0004814">
    <property type="term" value="F:arginine-tRNA ligase activity"/>
    <property type="evidence" value="ECO:0000318"/>
    <property type="project" value="GO_Central"/>
</dbReference>
<dbReference type="GO" id="GO:0005524">
    <property type="term" value="F:ATP binding"/>
    <property type="evidence" value="ECO:0007669"/>
    <property type="project" value="UniProtKB-UniRule"/>
</dbReference>
<dbReference type="GO" id="GO:0006420">
    <property type="term" value="P:arginyl-tRNA aminoacylation"/>
    <property type="evidence" value="ECO:0000318"/>
    <property type="project" value="GO_Central"/>
</dbReference>
<dbReference type="CDD" id="cd07956">
    <property type="entry name" value="Anticodon_Ia_Arg"/>
    <property type="match status" value="1"/>
</dbReference>
<dbReference type="CDD" id="cd00671">
    <property type="entry name" value="ArgRS_core"/>
    <property type="match status" value="1"/>
</dbReference>
<dbReference type="FunFam" id="1.10.730.10:FF:000034">
    <property type="entry name" value="Arginine--tRNA ligase"/>
    <property type="match status" value="1"/>
</dbReference>
<dbReference type="FunFam" id="3.30.1360.70:FF:000005">
    <property type="entry name" value="Arginine--tRNA ligase"/>
    <property type="match status" value="1"/>
</dbReference>
<dbReference type="FunFam" id="3.40.50.620:FF:000116">
    <property type="entry name" value="Arginine--tRNA ligase"/>
    <property type="match status" value="1"/>
</dbReference>
<dbReference type="Gene3D" id="3.30.1360.70">
    <property type="entry name" value="Arginyl tRNA synthetase N-terminal domain"/>
    <property type="match status" value="1"/>
</dbReference>
<dbReference type="Gene3D" id="3.40.50.620">
    <property type="entry name" value="HUPs"/>
    <property type="match status" value="1"/>
</dbReference>
<dbReference type="Gene3D" id="1.10.730.10">
    <property type="entry name" value="Isoleucyl-tRNA Synthetase, Domain 1"/>
    <property type="match status" value="1"/>
</dbReference>
<dbReference type="HAMAP" id="MF_00123">
    <property type="entry name" value="Arg_tRNA_synth"/>
    <property type="match status" value="1"/>
</dbReference>
<dbReference type="InterPro" id="IPR001278">
    <property type="entry name" value="Arg-tRNA-ligase"/>
</dbReference>
<dbReference type="InterPro" id="IPR005148">
    <property type="entry name" value="Arg-tRNA-synth_N"/>
</dbReference>
<dbReference type="InterPro" id="IPR036695">
    <property type="entry name" value="Arg-tRNA-synth_N_sf"/>
</dbReference>
<dbReference type="InterPro" id="IPR035684">
    <property type="entry name" value="ArgRS_core"/>
</dbReference>
<dbReference type="InterPro" id="IPR008909">
    <property type="entry name" value="DALR_anticod-bd"/>
</dbReference>
<dbReference type="InterPro" id="IPR014729">
    <property type="entry name" value="Rossmann-like_a/b/a_fold"/>
</dbReference>
<dbReference type="InterPro" id="IPR009080">
    <property type="entry name" value="tRNAsynth_Ia_anticodon-bd"/>
</dbReference>
<dbReference type="NCBIfam" id="TIGR00456">
    <property type="entry name" value="argS"/>
    <property type="match status" value="1"/>
</dbReference>
<dbReference type="PANTHER" id="PTHR11956:SF5">
    <property type="entry name" value="ARGININE--TRNA LIGASE, CYTOPLASMIC"/>
    <property type="match status" value="1"/>
</dbReference>
<dbReference type="PANTHER" id="PTHR11956">
    <property type="entry name" value="ARGINYL-TRNA SYNTHETASE"/>
    <property type="match status" value="1"/>
</dbReference>
<dbReference type="Pfam" id="PF03485">
    <property type="entry name" value="Arg_tRNA_synt_N"/>
    <property type="match status" value="1"/>
</dbReference>
<dbReference type="Pfam" id="PF05746">
    <property type="entry name" value="DALR_1"/>
    <property type="match status" value="1"/>
</dbReference>
<dbReference type="Pfam" id="PF00750">
    <property type="entry name" value="tRNA-synt_1d"/>
    <property type="match status" value="1"/>
</dbReference>
<dbReference type="PRINTS" id="PR01038">
    <property type="entry name" value="TRNASYNTHARG"/>
</dbReference>
<dbReference type="SMART" id="SM01016">
    <property type="entry name" value="Arg_tRNA_synt_N"/>
    <property type="match status" value="1"/>
</dbReference>
<dbReference type="SMART" id="SM00836">
    <property type="entry name" value="DALR_1"/>
    <property type="match status" value="1"/>
</dbReference>
<dbReference type="SUPFAM" id="SSF47323">
    <property type="entry name" value="Anticodon-binding domain of a subclass of class I aminoacyl-tRNA synthetases"/>
    <property type="match status" value="1"/>
</dbReference>
<dbReference type="SUPFAM" id="SSF55190">
    <property type="entry name" value="Arginyl-tRNA synthetase (ArgRS), N-terminal 'additional' domain"/>
    <property type="match status" value="1"/>
</dbReference>
<dbReference type="SUPFAM" id="SSF52374">
    <property type="entry name" value="Nucleotidylyl transferase"/>
    <property type="match status" value="1"/>
</dbReference>
<reference key="1">
    <citation type="journal article" date="2001" name="J. Bacteriol.">
        <title>Genome of the bacterium Streptococcus pneumoniae strain R6.</title>
        <authorList>
            <person name="Hoskins J."/>
            <person name="Alborn W.E. Jr."/>
            <person name="Arnold J."/>
            <person name="Blaszczak L.C."/>
            <person name="Burgett S."/>
            <person name="DeHoff B.S."/>
            <person name="Estrem S.T."/>
            <person name="Fritz L."/>
            <person name="Fu D.-J."/>
            <person name="Fuller W."/>
            <person name="Geringer C."/>
            <person name="Gilmour R."/>
            <person name="Glass J.S."/>
            <person name="Khoja H."/>
            <person name="Kraft A.R."/>
            <person name="Lagace R.E."/>
            <person name="LeBlanc D.J."/>
            <person name="Lee L.N."/>
            <person name="Lefkowitz E.J."/>
            <person name="Lu J."/>
            <person name="Matsushima P."/>
            <person name="McAhren S.M."/>
            <person name="McHenney M."/>
            <person name="McLeaster K."/>
            <person name="Mundy C.W."/>
            <person name="Nicas T.I."/>
            <person name="Norris F.H."/>
            <person name="O'Gara M."/>
            <person name="Peery R.B."/>
            <person name="Robertson G.T."/>
            <person name="Rockey P."/>
            <person name="Sun P.-M."/>
            <person name="Winkler M.E."/>
            <person name="Yang Y."/>
            <person name="Young-Bellido M."/>
            <person name="Zhao G."/>
            <person name="Zook C.A."/>
            <person name="Baltz R.H."/>
            <person name="Jaskunas S.R."/>
            <person name="Rosteck P.R. Jr."/>
            <person name="Skatrud P.L."/>
            <person name="Glass J.I."/>
        </authorList>
    </citation>
    <scope>NUCLEOTIDE SEQUENCE [LARGE SCALE GENOMIC DNA]</scope>
    <source>
        <strain>ATCC BAA-255 / R6</strain>
    </source>
</reference>
<reference key="2">
    <citation type="journal article" date="1988" name="J. Bacteriol.">
        <title>Nucleotide sequence of the hexA gene for DNA mismatch repair in Streptococcus pneumoniae and homology of hexA to mutS of Escherichia coli and Salmonella typhimurium.</title>
        <authorList>
            <person name="Priebe S.D."/>
            <person name="Hadi S.M."/>
            <person name="Greenberg B."/>
            <person name="Lacks S.A."/>
        </authorList>
    </citation>
    <scope>NUCLEOTIDE SEQUENCE [GENOMIC DNA] OF 1-108</scope>
</reference>
<gene>
    <name evidence="1" type="primary">argS</name>
    <name type="ordered locus">spr1890</name>
</gene>
<protein>
    <recommendedName>
        <fullName evidence="1">Arginine--tRNA ligase</fullName>
        <ecNumber evidence="1">6.1.1.19</ecNumber>
    </recommendedName>
    <alternativeName>
        <fullName evidence="1">Arginyl-tRNA synthetase</fullName>
        <shortName evidence="1">ArgRS</shortName>
    </alternativeName>
</protein>
<organism>
    <name type="scientific">Streptococcus pneumoniae (strain ATCC BAA-255 / R6)</name>
    <dbReference type="NCBI Taxonomy" id="171101"/>
    <lineage>
        <taxon>Bacteria</taxon>
        <taxon>Bacillati</taxon>
        <taxon>Bacillota</taxon>
        <taxon>Bacilli</taxon>
        <taxon>Lactobacillales</taxon>
        <taxon>Streptococcaceae</taxon>
        <taxon>Streptococcus</taxon>
    </lineage>
</organism>